<proteinExistence type="inferred from homology"/>
<protein>
    <recommendedName>
        <fullName evidence="1">tRNA (guanine-N(1)-)-methyltransferase</fullName>
        <ecNumber evidence="1">2.1.1.228</ecNumber>
    </recommendedName>
    <alternativeName>
        <fullName evidence="1">M1G-methyltransferase</fullName>
    </alternativeName>
    <alternativeName>
        <fullName evidence="1">tRNA [GM37] methyltransferase</fullName>
    </alternativeName>
</protein>
<dbReference type="EC" id="2.1.1.228" evidence="1"/>
<dbReference type="EMBL" id="AP009484">
    <property type="protein sequence ID" value="BAH17530.1"/>
    <property type="molecule type" value="Genomic_DNA"/>
</dbReference>
<dbReference type="RefSeq" id="WP_012656730.1">
    <property type="nucleotide sequence ID" value="NC_011999.1"/>
</dbReference>
<dbReference type="SMR" id="B9EBB9"/>
<dbReference type="STRING" id="458233.MCCL_0823"/>
<dbReference type="KEGG" id="mcl:MCCL_0823"/>
<dbReference type="eggNOG" id="COG0336">
    <property type="taxonomic scope" value="Bacteria"/>
</dbReference>
<dbReference type="HOGENOM" id="CLU_047363_0_1_9"/>
<dbReference type="OrthoDB" id="9807416at2"/>
<dbReference type="Proteomes" id="UP000001383">
    <property type="component" value="Chromosome"/>
</dbReference>
<dbReference type="GO" id="GO:0005829">
    <property type="term" value="C:cytosol"/>
    <property type="evidence" value="ECO:0007669"/>
    <property type="project" value="TreeGrafter"/>
</dbReference>
<dbReference type="GO" id="GO:0052906">
    <property type="term" value="F:tRNA (guanine(37)-N1)-methyltransferase activity"/>
    <property type="evidence" value="ECO:0007669"/>
    <property type="project" value="UniProtKB-UniRule"/>
</dbReference>
<dbReference type="GO" id="GO:0002939">
    <property type="term" value="P:tRNA N1-guanine methylation"/>
    <property type="evidence" value="ECO:0007669"/>
    <property type="project" value="TreeGrafter"/>
</dbReference>
<dbReference type="CDD" id="cd18080">
    <property type="entry name" value="TrmD-like"/>
    <property type="match status" value="1"/>
</dbReference>
<dbReference type="FunFam" id="1.10.1270.20:FF:000001">
    <property type="entry name" value="tRNA (guanine-N(1)-)-methyltransferase"/>
    <property type="match status" value="1"/>
</dbReference>
<dbReference type="FunFam" id="3.40.1280.10:FF:000001">
    <property type="entry name" value="tRNA (guanine-N(1)-)-methyltransferase"/>
    <property type="match status" value="1"/>
</dbReference>
<dbReference type="Gene3D" id="3.40.1280.10">
    <property type="match status" value="1"/>
</dbReference>
<dbReference type="Gene3D" id="1.10.1270.20">
    <property type="entry name" value="tRNA(m1g37)methyltransferase, domain 2"/>
    <property type="match status" value="1"/>
</dbReference>
<dbReference type="HAMAP" id="MF_00605">
    <property type="entry name" value="TrmD"/>
    <property type="match status" value="1"/>
</dbReference>
<dbReference type="InterPro" id="IPR029028">
    <property type="entry name" value="Alpha/beta_knot_MTases"/>
</dbReference>
<dbReference type="InterPro" id="IPR023148">
    <property type="entry name" value="tRNA_m1G_MeTrfase_C_sf"/>
</dbReference>
<dbReference type="InterPro" id="IPR002649">
    <property type="entry name" value="tRNA_m1G_MeTrfase_TrmD"/>
</dbReference>
<dbReference type="InterPro" id="IPR029026">
    <property type="entry name" value="tRNA_m1G_MTases_N"/>
</dbReference>
<dbReference type="InterPro" id="IPR016009">
    <property type="entry name" value="tRNA_MeTrfase_TRMD/TRM10"/>
</dbReference>
<dbReference type="NCBIfam" id="NF000648">
    <property type="entry name" value="PRK00026.1"/>
    <property type="match status" value="1"/>
</dbReference>
<dbReference type="NCBIfam" id="TIGR00088">
    <property type="entry name" value="trmD"/>
    <property type="match status" value="1"/>
</dbReference>
<dbReference type="PANTHER" id="PTHR46417">
    <property type="entry name" value="TRNA (GUANINE-N(1)-)-METHYLTRANSFERASE"/>
    <property type="match status" value="1"/>
</dbReference>
<dbReference type="PANTHER" id="PTHR46417:SF1">
    <property type="entry name" value="TRNA (GUANINE-N(1)-)-METHYLTRANSFERASE"/>
    <property type="match status" value="1"/>
</dbReference>
<dbReference type="Pfam" id="PF01746">
    <property type="entry name" value="tRNA_m1G_MT"/>
    <property type="match status" value="1"/>
</dbReference>
<dbReference type="PIRSF" id="PIRSF000386">
    <property type="entry name" value="tRNA_mtase"/>
    <property type="match status" value="1"/>
</dbReference>
<dbReference type="SUPFAM" id="SSF75217">
    <property type="entry name" value="alpha/beta knot"/>
    <property type="match status" value="1"/>
</dbReference>
<reference key="1">
    <citation type="journal article" date="2009" name="J. Bacteriol.">
        <title>Complete genome sequence of Macrococcus caseolyticus strain JCSCS5402, reflecting the ancestral genome of the human-pathogenic staphylococci.</title>
        <authorList>
            <person name="Baba T."/>
            <person name="Kuwahara-Arai K."/>
            <person name="Uchiyama I."/>
            <person name="Takeuchi F."/>
            <person name="Ito T."/>
            <person name="Hiramatsu K."/>
        </authorList>
    </citation>
    <scope>NUCLEOTIDE SEQUENCE [LARGE SCALE GENOMIC DNA]</scope>
    <source>
        <strain>JCSC5402</strain>
    </source>
</reference>
<gene>
    <name evidence="1" type="primary">trmD</name>
    <name type="ordered locus">MCCL_0823</name>
</gene>
<comment type="function">
    <text evidence="1">Specifically methylates guanosine-37 in various tRNAs.</text>
</comment>
<comment type="catalytic activity">
    <reaction evidence="1">
        <text>guanosine(37) in tRNA + S-adenosyl-L-methionine = N(1)-methylguanosine(37) in tRNA + S-adenosyl-L-homocysteine + H(+)</text>
        <dbReference type="Rhea" id="RHEA:36899"/>
        <dbReference type="Rhea" id="RHEA-COMP:10145"/>
        <dbReference type="Rhea" id="RHEA-COMP:10147"/>
        <dbReference type="ChEBI" id="CHEBI:15378"/>
        <dbReference type="ChEBI" id="CHEBI:57856"/>
        <dbReference type="ChEBI" id="CHEBI:59789"/>
        <dbReference type="ChEBI" id="CHEBI:73542"/>
        <dbReference type="ChEBI" id="CHEBI:74269"/>
        <dbReference type="EC" id="2.1.1.228"/>
    </reaction>
</comment>
<comment type="subunit">
    <text evidence="1">Homodimer.</text>
</comment>
<comment type="subcellular location">
    <subcellularLocation>
        <location evidence="1">Cytoplasm</location>
    </subcellularLocation>
</comment>
<comment type="similarity">
    <text evidence="1">Belongs to the RNA methyltransferase TrmD family.</text>
</comment>
<name>TRMD_MACCJ</name>
<evidence type="ECO:0000255" key="1">
    <source>
        <dbReference type="HAMAP-Rule" id="MF_00605"/>
    </source>
</evidence>
<keyword id="KW-0963">Cytoplasm</keyword>
<keyword id="KW-0489">Methyltransferase</keyword>
<keyword id="KW-1185">Reference proteome</keyword>
<keyword id="KW-0949">S-adenosyl-L-methionine</keyword>
<keyword id="KW-0808">Transferase</keyword>
<keyword id="KW-0819">tRNA processing</keyword>
<accession>B9EBB9</accession>
<sequence length="240" mass="27774">MKIDYLTLFPEMFDVLNHSIMKRAQEKGIVELNTVNFRDYSGNKHNQVDDYPYGGGQGMVLKPEPIFNAMNAIDKTSKTRVILMCPQGKPFTQQVAESLAQEEHLVFICGHYEGYDERIREHLVTDELSIGDYVLTGGELAAITMTDAIVRLIPESIKEESHLDDSFSTGLLEYPQYTRPADYNGMKVPDVLLSGNHKHIESWRHEMRLKRTFERRPDLLEHYPLTQSDKEYLEHLKRDK</sequence>
<feature type="chain" id="PRO_1000198577" description="tRNA (guanine-N(1)-)-methyltransferase">
    <location>
        <begin position="1"/>
        <end position="240"/>
    </location>
</feature>
<feature type="binding site" evidence="1">
    <location>
        <position position="110"/>
    </location>
    <ligand>
        <name>S-adenosyl-L-methionine</name>
        <dbReference type="ChEBI" id="CHEBI:59789"/>
    </ligand>
</feature>
<feature type="binding site" evidence="1">
    <location>
        <begin position="130"/>
        <end position="135"/>
    </location>
    <ligand>
        <name>S-adenosyl-L-methionine</name>
        <dbReference type="ChEBI" id="CHEBI:59789"/>
    </ligand>
</feature>
<organism>
    <name type="scientific">Macrococcus caseolyticus (strain JCSC5402)</name>
    <name type="common">Macrococcoides caseolyticum</name>
    <dbReference type="NCBI Taxonomy" id="458233"/>
    <lineage>
        <taxon>Bacteria</taxon>
        <taxon>Bacillati</taxon>
        <taxon>Bacillota</taxon>
        <taxon>Bacilli</taxon>
        <taxon>Bacillales</taxon>
        <taxon>Staphylococcaceae</taxon>
        <taxon>Macrococcoides</taxon>
    </lineage>
</organism>